<comment type="catalytic activity">
    <reaction evidence="1">
        <text>(2R)-3-phosphoglycerate + ATP = (2R)-3-phospho-glyceroyl phosphate + ADP</text>
        <dbReference type="Rhea" id="RHEA:14801"/>
        <dbReference type="ChEBI" id="CHEBI:30616"/>
        <dbReference type="ChEBI" id="CHEBI:57604"/>
        <dbReference type="ChEBI" id="CHEBI:58272"/>
        <dbReference type="ChEBI" id="CHEBI:456216"/>
        <dbReference type="EC" id="2.7.2.3"/>
    </reaction>
</comment>
<comment type="pathway">
    <text evidence="1">Carbohydrate degradation; glycolysis; pyruvate from D-glyceraldehyde 3-phosphate: step 2/5.</text>
</comment>
<comment type="subunit">
    <text evidence="1">Monomer.</text>
</comment>
<comment type="subcellular location">
    <subcellularLocation>
        <location evidence="1">Cytoplasm</location>
    </subcellularLocation>
</comment>
<comment type="similarity">
    <text evidence="1">Belongs to the phosphoglycerate kinase family.</text>
</comment>
<proteinExistence type="inferred from homology"/>
<reference key="1">
    <citation type="journal article" date="2000" name="Nature">
        <title>Complete DNA sequence of a serogroup A strain of Neisseria meningitidis Z2491.</title>
        <authorList>
            <person name="Parkhill J."/>
            <person name="Achtman M."/>
            <person name="James K.D."/>
            <person name="Bentley S.D."/>
            <person name="Churcher C.M."/>
            <person name="Klee S.R."/>
            <person name="Morelli G."/>
            <person name="Basham D."/>
            <person name="Brown D."/>
            <person name="Chillingworth T."/>
            <person name="Davies R.M."/>
            <person name="Davis P."/>
            <person name="Devlin K."/>
            <person name="Feltwell T."/>
            <person name="Hamlin N."/>
            <person name="Holroyd S."/>
            <person name="Jagels K."/>
            <person name="Leather S."/>
            <person name="Moule S."/>
            <person name="Mungall K.L."/>
            <person name="Quail M.A."/>
            <person name="Rajandream M.A."/>
            <person name="Rutherford K.M."/>
            <person name="Simmonds M."/>
            <person name="Skelton J."/>
            <person name="Whitehead S."/>
            <person name="Spratt B.G."/>
            <person name="Barrell B.G."/>
        </authorList>
    </citation>
    <scope>NUCLEOTIDE SEQUENCE [LARGE SCALE GENOMIC DNA]</scope>
    <source>
        <strain>DSM 15465 / Z2491</strain>
    </source>
</reference>
<accession>Q9JWS8</accession>
<accession>A1IPA3</accession>
<name>PGK_NEIMA</name>
<keyword id="KW-0067">ATP-binding</keyword>
<keyword id="KW-0963">Cytoplasm</keyword>
<keyword id="KW-0324">Glycolysis</keyword>
<keyword id="KW-0418">Kinase</keyword>
<keyword id="KW-0547">Nucleotide-binding</keyword>
<keyword id="KW-0808">Transferase</keyword>
<sequence length="392" mass="40662">MAFLKLTEQNVQGKTVLIRADMNVPFKDGKISDDTRIRASIASVKYCVDNGASVIVMTHLGRPTEGEFHPEDDVAPVAAHLGSLLGKDVKVLNDWRENKPALNAGDVVMLQNVRINKGEKKNDLELGKAYASLCDVFVNDAFGTAHRAQASTEAVAQAAPVACAGVLMAGELDALGKALKQPARPMVAIVAGSKVSTKLTILESLADKVDQLIVGGGIANTFLLAEGKAIGKSLAEHDLVEESKKIMAKMAAKGGSVPLPTDVVVAKAFAADAEAVVKDIADVAEDDMILDIGPKSAAALADLLKAADTVVWNGPVGVFEFDQFAGGTKALAEAIAQSKAFSIAGGGDTLAAIAKFGVTEQIGYISTGGGAFLEFLEGKELPAVAALEKRGA</sequence>
<evidence type="ECO:0000255" key="1">
    <source>
        <dbReference type="HAMAP-Rule" id="MF_00145"/>
    </source>
</evidence>
<dbReference type="EC" id="2.7.2.3" evidence="1"/>
<dbReference type="EMBL" id="AL157959">
    <property type="protein sequence ID" value="CAM07563.1"/>
    <property type="molecule type" value="Genomic_DNA"/>
</dbReference>
<dbReference type="PIR" id="E82020">
    <property type="entry name" value="E82020"/>
</dbReference>
<dbReference type="RefSeq" id="WP_002247179.1">
    <property type="nucleotide sequence ID" value="NC_003116.1"/>
</dbReference>
<dbReference type="SMR" id="Q9JWS8"/>
<dbReference type="EnsemblBacteria" id="CAM07563">
    <property type="protein sequence ID" value="CAM07563"/>
    <property type="gene ID" value="NMA0257"/>
</dbReference>
<dbReference type="KEGG" id="nma:NMA0257"/>
<dbReference type="HOGENOM" id="CLU_025427_0_2_4"/>
<dbReference type="UniPathway" id="UPA00109">
    <property type="reaction ID" value="UER00185"/>
</dbReference>
<dbReference type="Proteomes" id="UP000000626">
    <property type="component" value="Chromosome"/>
</dbReference>
<dbReference type="GO" id="GO:0005829">
    <property type="term" value="C:cytosol"/>
    <property type="evidence" value="ECO:0007669"/>
    <property type="project" value="TreeGrafter"/>
</dbReference>
<dbReference type="GO" id="GO:0043531">
    <property type="term" value="F:ADP binding"/>
    <property type="evidence" value="ECO:0007669"/>
    <property type="project" value="TreeGrafter"/>
</dbReference>
<dbReference type="GO" id="GO:0005524">
    <property type="term" value="F:ATP binding"/>
    <property type="evidence" value="ECO:0007669"/>
    <property type="project" value="UniProtKB-KW"/>
</dbReference>
<dbReference type="GO" id="GO:0004618">
    <property type="term" value="F:phosphoglycerate kinase activity"/>
    <property type="evidence" value="ECO:0007669"/>
    <property type="project" value="UniProtKB-UniRule"/>
</dbReference>
<dbReference type="GO" id="GO:0006094">
    <property type="term" value="P:gluconeogenesis"/>
    <property type="evidence" value="ECO:0007669"/>
    <property type="project" value="TreeGrafter"/>
</dbReference>
<dbReference type="GO" id="GO:0006096">
    <property type="term" value="P:glycolytic process"/>
    <property type="evidence" value="ECO:0007669"/>
    <property type="project" value="UniProtKB-UniRule"/>
</dbReference>
<dbReference type="FunFam" id="3.40.50.1260:FF:000001">
    <property type="entry name" value="Phosphoglycerate kinase"/>
    <property type="match status" value="1"/>
</dbReference>
<dbReference type="FunFam" id="3.40.50.1260:FF:000002">
    <property type="entry name" value="Phosphoglycerate kinase"/>
    <property type="match status" value="1"/>
</dbReference>
<dbReference type="Gene3D" id="3.40.50.1260">
    <property type="entry name" value="Phosphoglycerate kinase, N-terminal domain"/>
    <property type="match status" value="2"/>
</dbReference>
<dbReference type="HAMAP" id="MF_00145">
    <property type="entry name" value="Phosphoglyc_kinase"/>
    <property type="match status" value="1"/>
</dbReference>
<dbReference type="InterPro" id="IPR001576">
    <property type="entry name" value="Phosphoglycerate_kinase"/>
</dbReference>
<dbReference type="InterPro" id="IPR015911">
    <property type="entry name" value="Phosphoglycerate_kinase_CS"/>
</dbReference>
<dbReference type="InterPro" id="IPR015824">
    <property type="entry name" value="Phosphoglycerate_kinase_N"/>
</dbReference>
<dbReference type="InterPro" id="IPR036043">
    <property type="entry name" value="Phosphoglycerate_kinase_sf"/>
</dbReference>
<dbReference type="PANTHER" id="PTHR11406">
    <property type="entry name" value="PHOSPHOGLYCERATE KINASE"/>
    <property type="match status" value="1"/>
</dbReference>
<dbReference type="PANTHER" id="PTHR11406:SF23">
    <property type="entry name" value="PHOSPHOGLYCERATE KINASE 1, CHLOROPLASTIC-RELATED"/>
    <property type="match status" value="1"/>
</dbReference>
<dbReference type="Pfam" id="PF00162">
    <property type="entry name" value="PGK"/>
    <property type="match status" value="1"/>
</dbReference>
<dbReference type="PIRSF" id="PIRSF000724">
    <property type="entry name" value="Pgk"/>
    <property type="match status" value="1"/>
</dbReference>
<dbReference type="PRINTS" id="PR00477">
    <property type="entry name" value="PHGLYCKINASE"/>
</dbReference>
<dbReference type="SUPFAM" id="SSF53748">
    <property type="entry name" value="Phosphoglycerate kinase"/>
    <property type="match status" value="1"/>
</dbReference>
<dbReference type="PROSITE" id="PS00111">
    <property type="entry name" value="PGLYCERATE_KINASE"/>
    <property type="match status" value="1"/>
</dbReference>
<protein>
    <recommendedName>
        <fullName evidence="1">Phosphoglycerate kinase</fullName>
        <ecNumber evidence="1">2.7.2.3</ecNumber>
    </recommendedName>
</protein>
<gene>
    <name evidence="1" type="primary">pgk</name>
    <name type="ordered locus">NMA0257</name>
</gene>
<feature type="chain" id="PRO_0000145975" description="Phosphoglycerate kinase">
    <location>
        <begin position="1"/>
        <end position="392"/>
    </location>
</feature>
<feature type="binding site" evidence="1">
    <location>
        <begin position="21"/>
        <end position="23"/>
    </location>
    <ligand>
        <name>substrate</name>
    </ligand>
</feature>
<feature type="binding site" evidence="1">
    <location>
        <position position="36"/>
    </location>
    <ligand>
        <name>substrate</name>
    </ligand>
</feature>
<feature type="binding site" evidence="1">
    <location>
        <begin position="59"/>
        <end position="62"/>
    </location>
    <ligand>
        <name>substrate</name>
    </ligand>
</feature>
<feature type="binding site" evidence="1">
    <location>
        <position position="114"/>
    </location>
    <ligand>
        <name>substrate</name>
    </ligand>
</feature>
<feature type="binding site" evidence="1">
    <location>
        <position position="147"/>
    </location>
    <ligand>
        <name>substrate</name>
    </ligand>
</feature>
<feature type="binding site" evidence="1">
    <location>
        <position position="198"/>
    </location>
    <ligand>
        <name>ATP</name>
        <dbReference type="ChEBI" id="CHEBI:30616"/>
    </ligand>
</feature>
<feature type="binding site" evidence="1">
    <location>
        <position position="320"/>
    </location>
    <ligand>
        <name>ATP</name>
        <dbReference type="ChEBI" id="CHEBI:30616"/>
    </ligand>
</feature>
<feature type="binding site" evidence="1">
    <location>
        <begin position="346"/>
        <end position="349"/>
    </location>
    <ligand>
        <name>ATP</name>
        <dbReference type="ChEBI" id="CHEBI:30616"/>
    </ligand>
</feature>
<organism>
    <name type="scientific">Neisseria meningitidis serogroup A / serotype 4A (strain DSM 15465 / Z2491)</name>
    <dbReference type="NCBI Taxonomy" id="122587"/>
    <lineage>
        <taxon>Bacteria</taxon>
        <taxon>Pseudomonadati</taxon>
        <taxon>Pseudomonadota</taxon>
        <taxon>Betaproteobacteria</taxon>
        <taxon>Neisseriales</taxon>
        <taxon>Neisseriaceae</taxon>
        <taxon>Neisseria</taxon>
    </lineage>
</organism>